<dbReference type="EMBL" id="CP000777">
    <property type="protein sequence ID" value="ABZ93000.1"/>
    <property type="molecule type" value="Genomic_DNA"/>
</dbReference>
<dbReference type="RefSeq" id="WP_012387504.1">
    <property type="nucleotide sequence ID" value="NC_010842.1"/>
</dbReference>
<dbReference type="SMR" id="B0SBH9"/>
<dbReference type="KEGG" id="lbf:LBF_0461"/>
<dbReference type="HOGENOM" id="CLU_113688_0_2_12"/>
<dbReference type="GO" id="GO:0005829">
    <property type="term" value="C:cytosol"/>
    <property type="evidence" value="ECO:0007669"/>
    <property type="project" value="TreeGrafter"/>
</dbReference>
<dbReference type="GO" id="GO:0003723">
    <property type="term" value="F:RNA binding"/>
    <property type="evidence" value="ECO:0007669"/>
    <property type="project" value="UniProtKB-UniRule"/>
</dbReference>
<dbReference type="GO" id="GO:0006355">
    <property type="term" value="P:regulation of DNA-templated transcription"/>
    <property type="evidence" value="ECO:0007669"/>
    <property type="project" value="InterPro"/>
</dbReference>
<dbReference type="GO" id="GO:0043487">
    <property type="term" value="P:regulation of RNA stability"/>
    <property type="evidence" value="ECO:0007669"/>
    <property type="project" value="TreeGrafter"/>
</dbReference>
<dbReference type="GO" id="GO:0045974">
    <property type="term" value="P:regulation of translation, ncRNA-mediated"/>
    <property type="evidence" value="ECO:0007669"/>
    <property type="project" value="TreeGrafter"/>
</dbReference>
<dbReference type="CDD" id="cd01716">
    <property type="entry name" value="Hfq"/>
    <property type="match status" value="1"/>
</dbReference>
<dbReference type="Gene3D" id="2.30.30.100">
    <property type="match status" value="1"/>
</dbReference>
<dbReference type="HAMAP" id="MF_00436">
    <property type="entry name" value="Hfq"/>
    <property type="match status" value="1"/>
</dbReference>
<dbReference type="InterPro" id="IPR005001">
    <property type="entry name" value="Hfq"/>
</dbReference>
<dbReference type="InterPro" id="IPR010920">
    <property type="entry name" value="LSM_dom_sf"/>
</dbReference>
<dbReference type="InterPro" id="IPR047575">
    <property type="entry name" value="Sm"/>
</dbReference>
<dbReference type="NCBIfam" id="TIGR02383">
    <property type="entry name" value="Hfq"/>
    <property type="match status" value="1"/>
</dbReference>
<dbReference type="NCBIfam" id="NF001602">
    <property type="entry name" value="PRK00395.1"/>
    <property type="match status" value="1"/>
</dbReference>
<dbReference type="PANTHER" id="PTHR34772">
    <property type="entry name" value="RNA-BINDING PROTEIN HFQ"/>
    <property type="match status" value="1"/>
</dbReference>
<dbReference type="PANTHER" id="PTHR34772:SF1">
    <property type="entry name" value="RNA-BINDING PROTEIN HFQ"/>
    <property type="match status" value="1"/>
</dbReference>
<dbReference type="Pfam" id="PF17209">
    <property type="entry name" value="Hfq"/>
    <property type="match status" value="1"/>
</dbReference>
<dbReference type="SUPFAM" id="SSF50182">
    <property type="entry name" value="Sm-like ribonucleoproteins"/>
    <property type="match status" value="1"/>
</dbReference>
<dbReference type="PROSITE" id="PS52002">
    <property type="entry name" value="SM"/>
    <property type="match status" value="1"/>
</dbReference>
<reference key="1">
    <citation type="journal article" date="2008" name="PLoS ONE">
        <title>Genome sequence of the saprophyte Leptospira biflexa provides insights into the evolution of Leptospira and the pathogenesis of leptospirosis.</title>
        <authorList>
            <person name="Picardeau M."/>
            <person name="Bulach D.M."/>
            <person name="Bouchier C."/>
            <person name="Zuerner R.L."/>
            <person name="Zidane N."/>
            <person name="Wilson P.J."/>
            <person name="Creno S."/>
            <person name="Kuczek E.S."/>
            <person name="Bommezzadri S."/>
            <person name="Davis J.C."/>
            <person name="McGrath A."/>
            <person name="Johnson M.J."/>
            <person name="Boursaux-Eude C."/>
            <person name="Seemann T."/>
            <person name="Rouy Z."/>
            <person name="Coppel R.L."/>
            <person name="Rood J.I."/>
            <person name="Lajus A."/>
            <person name="Davies J.K."/>
            <person name="Medigue C."/>
            <person name="Adler B."/>
        </authorList>
    </citation>
    <scope>NUCLEOTIDE SEQUENCE [LARGE SCALE GENOMIC DNA]</scope>
    <source>
        <strain>Patoc 1 / Ames</strain>
    </source>
</reference>
<comment type="function">
    <text evidence="1">RNA chaperone that binds small regulatory RNA (sRNAs) and mRNAs to facilitate mRNA translational regulation in response to envelope stress, environmental stress and changes in metabolite concentrations. Also binds with high specificity to tRNAs.</text>
</comment>
<comment type="subunit">
    <text evidence="1">Homohexamer.</text>
</comment>
<comment type="similarity">
    <text evidence="1">Belongs to the Hfq family.</text>
</comment>
<feature type="chain" id="PRO_1000190335" description="RNA-binding protein Hfq">
    <location>
        <begin position="1"/>
        <end position="83"/>
    </location>
</feature>
<feature type="domain" description="Sm" evidence="2">
    <location>
        <begin position="9"/>
        <end position="69"/>
    </location>
</feature>
<evidence type="ECO:0000255" key="1">
    <source>
        <dbReference type="HAMAP-Rule" id="MF_00436"/>
    </source>
</evidence>
<evidence type="ECO:0000255" key="2">
    <source>
        <dbReference type="PROSITE-ProRule" id="PRU01346"/>
    </source>
</evidence>
<accession>B0SBH9</accession>
<organism>
    <name type="scientific">Leptospira biflexa serovar Patoc (strain Patoc 1 / Ames)</name>
    <dbReference type="NCBI Taxonomy" id="355278"/>
    <lineage>
        <taxon>Bacteria</taxon>
        <taxon>Pseudomonadati</taxon>
        <taxon>Spirochaetota</taxon>
        <taxon>Spirochaetia</taxon>
        <taxon>Leptospirales</taxon>
        <taxon>Leptospiraceae</taxon>
        <taxon>Leptospira</taxon>
    </lineage>
</organism>
<name>HFQ_LEPBA</name>
<keyword id="KW-0694">RNA-binding</keyword>
<keyword id="KW-0346">Stress response</keyword>
<protein>
    <recommendedName>
        <fullName evidence="1">RNA-binding protein Hfq</fullName>
    </recommendedName>
</protein>
<proteinExistence type="inferred from homology"/>
<gene>
    <name evidence="1" type="primary">hfq</name>
    <name type="ordered locus">LBF_0461</name>
</gene>
<sequence>MSAKNNIQDQLLNTARKEKIDLTIYLLNGVPLKGKVVSFDNFTIILENENKQNLVYKHAISTIIPAKPIKLHSEETPKEAGGV</sequence>